<comment type="function">
    <text evidence="1">One of the early assembly proteins it binds 23S rRNA. One of the proteins that surrounds the polypeptide exit tunnel on the outside of the ribosome. Forms the main docking site for trigger factor binding to the ribosome.</text>
</comment>
<comment type="subunit">
    <text evidence="1">Part of the 50S ribosomal subunit. Contacts protein L29, and trigger factor when it is bound to the ribosome.</text>
</comment>
<comment type="similarity">
    <text evidence="1">Belongs to the universal ribosomal protein uL23 family.</text>
</comment>
<protein>
    <recommendedName>
        <fullName evidence="1">Large ribosomal subunit protein uL23</fullName>
    </recommendedName>
    <alternativeName>
        <fullName evidence="2">50S ribosomal protein L23</fullName>
    </alternativeName>
</protein>
<feature type="chain" id="PRO_1000073439" description="Large ribosomal subunit protein uL23">
    <location>
        <begin position="1"/>
        <end position="98"/>
    </location>
</feature>
<evidence type="ECO:0000255" key="1">
    <source>
        <dbReference type="HAMAP-Rule" id="MF_01369"/>
    </source>
</evidence>
<evidence type="ECO:0000305" key="2"/>
<dbReference type="EMBL" id="CP000481">
    <property type="protein sequence ID" value="ABK52082.1"/>
    <property type="molecule type" value="Genomic_DNA"/>
</dbReference>
<dbReference type="RefSeq" id="WP_011719145.1">
    <property type="nucleotide sequence ID" value="NC_008578.1"/>
</dbReference>
<dbReference type="SMR" id="A0LRM2"/>
<dbReference type="FunCoup" id="A0LRM2">
    <property type="interactions" value="127"/>
</dbReference>
<dbReference type="STRING" id="351607.Acel_0308"/>
<dbReference type="KEGG" id="ace:Acel_0308"/>
<dbReference type="eggNOG" id="COG0089">
    <property type="taxonomic scope" value="Bacteria"/>
</dbReference>
<dbReference type="HOGENOM" id="CLU_037562_3_2_11"/>
<dbReference type="InParanoid" id="A0LRM2"/>
<dbReference type="OrthoDB" id="9793353at2"/>
<dbReference type="Proteomes" id="UP000008221">
    <property type="component" value="Chromosome"/>
</dbReference>
<dbReference type="GO" id="GO:1990904">
    <property type="term" value="C:ribonucleoprotein complex"/>
    <property type="evidence" value="ECO:0007669"/>
    <property type="project" value="UniProtKB-KW"/>
</dbReference>
<dbReference type="GO" id="GO:0005840">
    <property type="term" value="C:ribosome"/>
    <property type="evidence" value="ECO:0007669"/>
    <property type="project" value="UniProtKB-KW"/>
</dbReference>
<dbReference type="GO" id="GO:0019843">
    <property type="term" value="F:rRNA binding"/>
    <property type="evidence" value="ECO:0007669"/>
    <property type="project" value="UniProtKB-UniRule"/>
</dbReference>
<dbReference type="GO" id="GO:0003735">
    <property type="term" value="F:structural constituent of ribosome"/>
    <property type="evidence" value="ECO:0007669"/>
    <property type="project" value="InterPro"/>
</dbReference>
<dbReference type="GO" id="GO:0006412">
    <property type="term" value="P:translation"/>
    <property type="evidence" value="ECO:0007669"/>
    <property type="project" value="UniProtKB-UniRule"/>
</dbReference>
<dbReference type="FunFam" id="3.30.70.330:FF:000001">
    <property type="entry name" value="50S ribosomal protein L23"/>
    <property type="match status" value="1"/>
</dbReference>
<dbReference type="Gene3D" id="3.30.70.330">
    <property type="match status" value="1"/>
</dbReference>
<dbReference type="HAMAP" id="MF_01369_B">
    <property type="entry name" value="Ribosomal_uL23_B"/>
    <property type="match status" value="1"/>
</dbReference>
<dbReference type="InterPro" id="IPR012677">
    <property type="entry name" value="Nucleotide-bd_a/b_plait_sf"/>
</dbReference>
<dbReference type="InterPro" id="IPR013025">
    <property type="entry name" value="Ribosomal_uL23-like"/>
</dbReference>
<dbReference type="InterPro" id="IPR012678">
    <property type="entry name" value="Ribosomal_uL23/eL15/eS24_sf"/>
</dbReference>
<dbReference type="NCBIfam" id="NF004363">
    <property type="entry name" value="PRK05738.2-4"/>
    <property type="match status" value="1"/>
</dbReference>
<dbReference type="NCBIfam" id="NF004364">
    <property type="entry name" value="PRK05738.2-5"/>
    <property type="match status" value="1"/>
</dbReference>
<dbReference type="PANTHER" id="PTHR11620">
    <property type="entry name" value="60S RIBOSOMAL PROTEIN L23A"/>
    <property type="match status" value="1"/>
</dbReference>
<dbReference type="Pfam" id="PF00276">
    <property type="entry name" value="Ribosomal_L23"/>
    <property type="match status" value="1"/>
</dbReference>
<dbReference type="SUPFAM" id="SSF54189">
    <property type="entry name" value="Ribosomal proteins S24e, L23 and L15e"/>
    <property type="match status" value="1"/>
</dbReference>
<accession>A0LRM2</accession>
<gene>
    <name evidence="1" type="primary">rplW</name>
    <name type="ordered locus">Acel_0308</name>
</gene>
<sequence>MSSDPRDVLLAPVISEKSYGLLDQNKYTFLVPPESNKTQIKIAVEKVFNVRVLDVNTINRQGKRKRTRRGWGQRKNTKRAIVTVAPGDRIDIFGPPVS</sequence>
<name>RL23_ACIC1</name>
<proteinExistence type="inferred from homology"/>
<reference key="1">
    <citation type="journal article" date="2009" name="Genome Res.">
        <title>Complete genome of the cellulolytic thermophile Acidothermus cellulolyticus 11B provides insights into its ecophysiological and evolutionary adaptations.</title>
        <authorList>
            <person name="Barabote R.D."/>
            <person name="Xie G."/>
            <person name="Leu D.H."/>
            <person name="Normand P."/>
            <person name="Necsulea A."/>
            <person name="Daubin V."/>
            <person name="Medigue C."/>
            <person name="Adney W.S."/>
            <person name="Xu X.C."/>
            <person name="Lapidus A."/>
            <person name="Parales R.E."/>
            <person name="Detter C."/>
            <person name="Pujic P."/>
            <person name="Bruce D."/>
            <person name="Lavire C."/>
            <person name="Challacombe J.F."/>
            <person name="Brettin T.S."/>
            <person name="Berry A.M."/>
        </authorList>
    </citation>
    <scope>NUCLEOTIDE SEQUENCE [LARGE SCALE GENOMIC DNA]</scope>
    <source>
        <strain>ATCC 43068 / DSM 8971 / 11B</strain>
    </source>
</reference>
<keyword id="KW-1185">Reference proteome</keyword>
<keyword id="KW-0687">Ribonucleoprotein</keyword>
<keyword id="KW-0689">Ribosomal protein</keyword>
<keyword id="KW-0694">RNA-binding</keyword>
<keyword id="KW-0699">rRNA-binding</keyword>
<organism>
    <name type="scientific">Acidothermus cellulolyticus (strain ATCC 43068 / DSM 8971 / 11B)</name>
    <dbReference type="NCBI Taxonomy" id="351607"/>
    <lineage>
        <taxon>Bacteria</taxon>
        <taxon>Bacillati</taxon>
        <taxon>Actinomycetota</taxon>
        <taxon>Actinomycetes</taxon>
        <taxon>Acidothermales</taxon>
        <taxon>Acidothermaceae</taxon>
        <taxon>Acidothermus</taxon>
    </lineage>
</organism>